<reference key="1">
    <citation type="submission" date="2007-08" db="EMBL/GenBank/DDBJ databases">
        <authorList>
            <consortium name="The Vibrio harveyi Genome Sequencing Project"/>
            <person name="Bassler B."/>
            <person name="Clifton S.W."/>
            <person name="Fulton L."/>
            <person name="Delehaunty K."/>
            <person name="Fronick C."/>
            <person name="Harrison M."/>
            <person name="Markivic C."/>
            <person name="Fulton R."/>
            <person name="Tin-Wollam A.-M."/>
            <person name="Shah N."/>
            <person name="Pepin K."/>
            <person name="Nash W."/>
            <person name="Thiruvilangam P."/>
            <person name="Bhonagiri V."/>
            <person name="Waters C."/>
            <person name="Tu K.C."/>
            <person name="Irgon J."/>
            <person name="Wilson R.K."/>
        </authorList>
    </citation>
    <scope>NUCLEOTIDE SEQUENCE [LARGE SCALE GENOMIC DNA]</scope>
    <source>
        <strain>ATCC BAA-1116 / BB120</strain>
    </source>
</reference>
<evidence type="ECO:0000255" key="1">
    <source>
        <dbReference type="HAMAP-Rule" id="MF_00090"/>
    </source>
</evidence>
<comment type="function">
    <text evidence="1">Catalyzes the methyl esterification of L-isoaspartyl residues in peptides and proteins that result from spontaneous decomposition of normal L-aspartyl and L-asparaginyl residues. It plays a role in the repair and/or degradation of damaged proteins.</text>
</comment>
<comment type="catalytic activity">
    <reaction evidence="1">
        <text>[protein]-L-isoaspartate + S-adenosyl-L-methionine = [protein]-L-isoaspartate alpha-methyl ester + S-adenosyl-L-homocysteine</text>
        <dbReference type="Rhea" id="RHEA:12705"/>
        <dbReference type="Rhea" id="RHEA-COMP:12143"/>
        <dbReference type="Rhea" id="RHEA-COMP:12144"/>
        <dbReference type="ChEBI" id="CHEBI:57856"/>
        <dbReference type="ChEBI" id="CHEBI:59789"/>
        <dbReference type="ChEBI" id="CHEBI:90596"/>
        <dbReference type="ChEBI" id="CHEBI:90598"/>
        <dbReference type="EC" id="2.1.1.77"/>
    </reaction>
</comment>
<comment type="subcellular location">
    <subcellularLocation>
        <location evidence="1">Cytoplasm</location>
    </subcellularLocation>
</comment>
<comment type="similarity">
    <text evidence="1">Belongs to the methyltransferase superfamily. L-isoaspartyl/D-aspartyl protein methyltransferase family.</text>
</comment>
<proteinExistence type="inferred from homology"/>
<organism>
    <name type="scientific">Vibrio campbellii (strain ATCC BAA-1116)</name>
    <dbReference type="NCBI Taxonomy" id="2902295"/>
    <lineage>
        <taxon>Bacteria</taxon>
        <taxon>Pseudomonadati</taxon>
        <taxon>Pseudomonadota</taxon>
        <taxon>Gammaproteobacteria</taxon>
        <taxon>Vibrionales</taxon>
        <taxon>Vibrionaceae</taxon>
        <taxon>Vibrio</taxon>
    </lineage>
</organism>
<name>PIMT_VIBC1</name>
<sequence>MTNPHADRLIAFLISSGISDQRVLDAIYRLPRESFVSQAMMHQAYDNNALPIGQGQTISQPYIVAKMTELLDLKSDSNVLEIGTGSGYQTAVLAQIVDHVYSVERIKSLQWDAKRRLKQLDIYNVSTKHGDGWLGWEAKGPFDAIIVTAAAESVPQALLSQLKEGGKMIIPVGEEEQQLLKIERQGEQYLSTVVEMVRFVPLVAGDLA</sequence>
<accession>A7MTT6</accession>
<dbReference type="EC" id="2.1.1.77" evidence="1"/>
<dbReference type="EMBL" id="CP000789">
    <property type="protein sequence ID" value="ABU72455.1"/>
    <property type="molecule type" value="Genomic_DNA"/>
</dbReference>
<dbReference type="RefSeq" id="WP_012128909.1">
    <property type="nucleotide sequence ID" value="NC_022269.1"/>
</dbReference>
<dbReference type="SMR" id="A7MTT6"/>
<dbReference type="KEGG" id="vha:VIBHAR_03519"/>
<dbReference type="PATRIC" id="fig|338187.25.peg.2691"/>
<dbReference type="Proteomes" id="UP000008152">
    <property type="component" value="Chromosome I"/>
</dbReference>
<dbReference type="GO" id="GO:0005737">
    <property type="term" value="C:cytoplasm"/>
    <property type="evidence" value="ECO:0007669"/>
    <property type="project" value="UniProtKB-SubCell"/>
</dbReference>
<dbReference type="GO" id="GO:0004719">
    <property type="term" value="F:protein-L-isoaspartate (D-aspartate) O-methyltransferase activity"/>
    <property type="evidence" value="ECO:0007669"/>
    <property type="project" value="UniProtKB-UniRule"/>
</dbReference>
<dbReference type="GO" id="GO:0032259">
    <property type="term" value="P:methylation"/>
    <property type="evidence" value="ECO:0007669"/>
    <property type="project" value="UniProtKB-KW"/>
</dbReference>
<dbReference type="GO" id="GO:0036211">
    <property type="term" value="P:protein modification process"/>
    <property type="evidence" value="ECO:0007669"/>
    <property type="project" value="UniProtKB-UniRule"/>
</dbReference>
<dbReference type="GO" id="GO:0030091">
    <property type="term" value="P:protein repair"/>
    <property type="evidence" value="ECO:0007669"/>
    <property type="project" value="UniProtKB-UniRule"/>
</dbReference>
<dbReference type="CDD" id="cd02440">
    <property type="entry name" value="AdoMet_MTases"/>
    <property type="match status" value="1"/>
</dbReference>
<dbReference type="FunFam" id="3.40.50.150:FF:000010">
    <property type="entry name" value="Protein-L-isoaspartate O-methyltransferase"/>
    <property type="match status" value="1"/>
</dbReference>
<dbReference type="Gene3D" id="3.40.50.150">
    <property type="entry name" value="Vaccinia Virus protein VP39"/>
    <property type="match status" value="1"/>
</dbReference>
<dbReference type="HAMAP" id="MF_00090">
    <property type="entry name" value="PIMT"/>
    <property type="match status" value="1"/>
</dbReference>
<dbReference type="InterPro" id="IPR000682">
    <property type="entry name" value="PCMT"/>
</dbReference>
<dbReference type="InterPro" id="IPR029063">
    <property type="entry name" value="SAM-dependent_MTases_sf"/>
</dbReference>
<dbReference type="NCBIfam" id="TIGR00080">
    <property type="entry name" value="pimt"/>
    <property type="match status" value="1"/>
</dbReference>
<dbReference type="NCBIfam" id="NF001453">
    <property type="entry name" value="PRK00312.1"/>
    <property type="match status" value="1"/>
</dbReference>
<dbReference type="PANTHER" id="PTHR11579">
    <property type="entry name" value="PROTEIN-L-ISOASPARTATE O-METHYLTRANSFERASE"/>
    <property type="match status" value="1"/>
</dbReference>
<dbReference type="PANTHER" id="PTHR11579:SF0">
    <property type="entry name" value="PROTEIN-L-ISOASPARTATE(D-ASPARTATE) O-METHYLTRANSFERASE"/>
    <property type="match status" value="1"/>
</dbReference>
<dbReference type="Pfam" id="PF01135">
    <property type="entry name" value="PCMT"/>
    <property type="match status" value="1"/>
</dbReference>
<dbReference type="SUPFAM" id="SSF53335">
    <property type="entry name" value="S-adenosyl-L-methionine-dependent methyltransferases"/>
    <property type="match status" value="1"/>
</dbReference>
<dbReference type="PROSITE" id="PS01279">
    <property type="entry name" value="PCMT"/>
    <property type="match status" value="1"/>
</dbReference>
<feature type="chain" id="PRO_1000004830" description="Protein-L-isoaspartate O-methyltransferase">
    <location>
        <begin position="1"/>
        <end position="208"/>
    </location>
</feature>
<feature type="active site" evidence="1">
    <location>
        <position position="59"/>
    </location>
</feature>
<gene>
    <name evidence="1" type="primary">pcm</name>
    <name type="ordered locus">VIBHAR_03519</name>
</gene>
<keyword id="KW-0963">Cytoplasm</keyword>
<keyword id="KW-0489">Methyltransferase</keyword>
<keyword id="KW-0949">S-adenosyl-L-methionine</keyword>
<keyword id="KW-0808">Transferase</keyword>
<protein>
    <recommendedName>
        <fullName evidence="1">Protein-L-isoaspartate O-methyltransferase</fullName>
        <ecNumber evidence="1">2.1.1.77</ecNumber>
    </recommendedName>
    <alternativeName>
        <fullName evidence="1">L-isoaspartyl protein carboxyl methyltransferase</fullName>
    </alternativeName>
    <alternativeName>
        <fullName evidence="1">Protein L-isoaspartyl methyltransferase</fullName>
    </alternativeName>
    <alternativeName>
        <fullName evidence="1">Protein-beta-aspartate methyltransferase</fullName>
        <shortName evidence="1">PIMT</shortName>
    </alternativeName>
</protein>